<keyword id="KW-1003">Cell membrane</keyword>
<keyword id="KW-0472">Membrane</keyword>
<keyword id="KW-1185">Reference proteome</keyword>
<keyword id="KW-0808">Transferase</keyword>
<keyword id="KW-0812">Transmembrane</keyword>
<keyword id="KW-1133">Transmembrane helix</keyword>
<evidence type="ECO:0000255" key="1">
    <source>
        <dbReference type="HAMAP-Rule" id="MF_01147"/>
    </source>
</evidence>
<organism>
    <name type="scientific">Mycobacterium leprae (strain TN)</name>
    <dbReference type="NCBI Taxonomy" id="272631"/>
    <lineage>
        <taxon>Bacteria</taxon>
        <taxon>Bacillati</taxon>
        <taxon>Actinomycetota</taxon>
        <taxon>Actinomycetes</taxon>
        <taxon>Mycobacteriales</taxon>
        <taxon>Mycobacteriaceae</taxon>
        <taxon>Mycobacterium</taxon>
    </lineage>
</organism>
<proteinExistence type="inferred from homology"/>
<name>LGT_MYCLE</name>
<comment type="function">
    <text evidence="1">Catalyzes the transfer of the diacylglyceryl group from phosphatidylglycerol to the sulfhydryl group of the N-terminal cysteine of a prolipoprotein, the first step in the formation of mature lipoproteins.</text>
</comment>
<comment type="catalytic activity">
    <reaction evidence="1">
        <text>L-cysteinyl-[prolipoprotein] + a 1,2-diacyl-sn-glycero-3-phospho-(1'-sn-glycerol) = an S-1,2-diacyl-sn-glyceryl-L-cysteinyl-[prolipoprotein] + sn-glycerol 1-phosphate + H(+)</text>
        <dbReference type="Rhea" id="RHEA:56712"/>
        <dbReference type="Rhea" id="RHEA-COMP:14679"/>
        <dbReference type="Rhea" id="RHEA-COMP:14680"/>
        <dbReference type="ChEBI" id="CHEBI:15378"/>
        <dbReference type="ChEBI" id="CHEBI:29950"/>
        <dbReference type="ChEBI" id="CHEBI:57685"/>
        <dbReference type="ChEBI" id="CHEBI:64716"/>
        <dbReference type="ChEBI" id="CHEBI:140658"/>
        <dbReference type="EC" id="2.5.1.145"/>
    </reaction>
</comment>
<comment type="pathway">
    <text evidence="1">Protein modification; lipoprotein biosynthesis (diacylglyceryl transfer).</text>
</comment>
<comment type="subcellular location">
    <subcellularLocation>
        <location evidence="1">Cell membrane</location>
        <topology evidence="1">Multi-pass membrane protein</topology>
    </subcellularLocation>
</comment>
<comment type="similarity">
    <text evidence="1">Belongs to the Lgt family.</text>
</comment>
<reference key="1">
    <citation type="journal article" date="2001" name="Nature">
        <title>Massive gene decay in the leprosy bacillus.</title>
        <authorList>
            <person name="Cole S.T."/>
            <person name="Eiglmeier K."/>
            <person name="Parkhill J."/>
            <person name="James K.D."/>
            <person name="Thomson N.R."/>
            <person name="Wheeler P.R."/>
            <person name="Honore N."/>
            <person name="Garnier T."/>
            <person name="Churcher C.M."/>
            <person name="Harris D.E."/>
            <person name="Mungall K.L."/>
            <person name="Basham D."/>
            <person name="Brown D."/>
            <person name="Chillingworth T."/>
            <person name="Connor R."/>
            <person name="Davies R.M."/>
            <person name="Devlin K."/>
            <person name="Duthoy S."/>
            <person name="Feltwell T."/>
            <person name="Fraser A."/>
            <person name="Hamlin N."/>
            <person name="Holroyd S."/>
            <person name="Hornsby T."/>
            <person name="Jagels K."/>
            <person name="Lacroix C."/>
            <person name="Maclean J."/>
            <person name="Moule S."/>
            <person name="Murphy L.D."/>
            <person name="Oliver K."/>
            <person name="Quail M.A."/>
            <person name="Rajandream M.A."/>
            <person name="Rutherford K.M."/>
            <person name="Rutter S."/>
            <person name="Seeger K."/>
            <person name="Simon S."/>
            <person name="Simmonds M."/>
            <person name="Skelton J."/>
            <person name="Squares R."/>
            <person name="Squares S."/>
            <person name="Stevens K."/>
            <person name="Taylor K."/>
            <person name="Whitehead S."/>
            <person name="Woodward J.R."/>
            <person name="Barrell B.G."/>
        </authorList>
    </citation>
    <scope>NUCLEOTIDE SEQUENCE [LARGE SCALE GENOMIC DNA]</scope>
    <source>
        <strain>TN</strain>
    </source>
</reference>
<accession>Q9CC52</accession>
<dbReference type="EC" id="2.5.1.145" evidence="1"/>
<dbReference type="EMBL" id="AL583921">
    <property type="protein sequence ID" value="CAC31655.1"/>
    <property type="molecule type" value="Genomic_DNA"/>
</dbReference>
<dbReference type="PIR" id="D87068">
    <property type="entry name" value="D87068"/>
</dbReference>
<dbReference type="RefSeq" id="NP_301919.1">
    <property type="nucleotide sequence ID" value="NC_002677.1"/>
</dbReference>
<dbReference type="SMR" id="Q9CC52"/>
<dbReference type="STRING" id="272631.gene:17575106"/>
<dbReference type="KEGG" id="mle:ML1274"/>
<dbReference type="PATRIC" id="fig|272631.5.peg.2338"/>
<dbReference type="Leproma" id="ML1274"/>
<dbReference type="eggNOG" id="COG0682">
    <property type="taxonomic scope" value="Bacteria"/>
</dbReference>
<dbReference type="HOGENOM" id="CLU_013386_2_0_11"/>
<dbReference type="OrthoDB" id="871140at2"/>
<dbReference type="UniPathway" id="UPA00664"/>
<dbReference type="Proteomes" id="UP000000806">
    <property type="component" value="Chromosome"/>
</dbReference>
<dbReference type="GO" id="GO:0005886">
    <property type="term" value="C:plasma membrane"/>
    <property type="evidence" value="ECO:0007669"/>
    <property type="project" value="UniProtKB-SubCell"/>
</dbReference>
<dbReference type="GO" id="GO:0008961">
    <property type="term" value="F:phosphatidylglycerol-prolipoprotein diacylglyceryl transferase activity"/>
    <property type="evidence" value="ECO:0007669"/>
    <property type="project" value="UniProtKB-UniRule"/>
</dbReference>
<dbReference type="GO" id="GO:0042158">
    <property type="term" value="P:lipoprotein biosynthetic process"/>
    <property type="evidence" value="ECO:0007669"/>
    <property type="project" value="UniProtKB-UniRule"/>
</dbReference>
<dbReference type="HAMAP" id="MF_01147">
    <property type="entry name" value="Lgt"/>
    <property type="match status" value="1"/>
</dbReference>
<dbReference type="InterPro" id="IPR001640">
    <property type="entry name" value="Lgt"/>
</dbReference>
<dbReference type="NCBIfam" id="TIGR00544">
    <property type="entry name" value="lgt"/>
    <property type="match status" value="1"/>
</dbReference>
<dbReference type="PANTHER" id="PTHR30589:SF0">
    <property type="entry name" value="PHOSPHATIDYLGLYCEROL--PROLIPOPROTEIN DIACYLGLYCERYL TRANSFERASE"/>
    <property type="match status" value="1"/>
</dbReference>
<dbReference type="PANTHER" id="PTHR30589">
    <property type="entry name" value="PROLIPOPROTEIN DIACYLGLYCERYL TRANSFERASE"/>
    <property type="match status" value="1"/>
</dbReference>
<dbReference type="Pfam" id="PF01790">
    <property type="entry name" value="LGT"/>
    <property type="match status" value="1"/>
</dbReference>
<dbReference type="PROSITE" id="PS01311">
    <property type="entry name" value="LGT"/>
    <property type="match status" value="1"/>
</dbReference>
<gene>
    <name evidence="1" type="primary">lgt</name>
    <name type="ordered locus">ML1274</name>
</gene>
<sequence>MTRMLPGYFPSPPRGVWHLGPLPIRAYALLIILGIVAALVVGGRCWEARGGERDVTYDIALWAVPFGLVGGRLYHLATDWRTYFGQNGAGLGAALRIWDGGLGIWGAVALGCVGAWLGCRRHRIPLPAFGDALAPGIILAQAIGRLGNYFNQELYGRETTMPWGLEVFYRRDPAGYMDPHSLDGVSTGQLAFVVQPTFLYELIWNVLVFFALIYVDRWFTLGHGRLFATYVAAYCIGRFCVELLRDDAATHIAGIRINSFTSTFVFIGAVVYIILAPKGREEPENLCRAEYVAREIPEPESATERATVASTYATTTAVPVSADEEFAETN</sequence>
<feature type="chain" id="PRO_0000172634" description="Phosphatidylglycerol--prolipoprotein diacylglyceryl transferase">
    <location>
        <begin position="1"/>
        <end position="330"/>
    </location>
</feature>
<feature type="transmembrane region" description="Helical" evidence="1">
    <location>
        <begin position="22"/>
        <end position="42"/>
    </location>
</feature>
<feature type="transmembrane region" description="Helical" evidence="1">
    <location>
        <begin position="57"/>
        <end position="77"/>
    </location>
</feature>
<feature type="transmembrane region" description="Helical" evidence="1">
    <location>
        <begin position="97"/>
        <end position="117"/>
    </location>
</feature>
<feature type="transmembrane region" description="Helical" evidence="1">
    <location>
        <begin position="193"/>
        <end position="213"/>
    </location>
</feature>
<feature type="transmembrane region" description="Helical" evidence="1">
    <location>
        <begin position="257"/>
        <end position="277"/>
    </location>
</feature>
<feature type="binding site" evidence="1">
    <location>
        <position position="145"/>
    </location>
    <ligand>
        <name>a 1,2-diacyl-sn-glycero-3-phospho-(1'-sn-glycerol)</name>
        <dbReference type="ChEBI" id="CHEBI:64716"/>
    </ligand>
</feature>
<protein>
    <recommendedName>
        <fullName evidence="1">Phosphatidylglycerol--prolipoprotein diacylglyceryl transferase</fullName>
        <ecNumber evidence="1">2.5.1.145</ecNumber>
    </recommendedName>
</protein>